<accession>Q28377</accession>
<accession>F7CS60</accession>
<accession>Q28378</accession>
<gene>
    <name evidence="2" type="primary">FN1</name>
</gene>
<keyword id="KW-0011">Acute phase</keyword>
<keyword id="KW-0025">Alternative splicing</keyword>
<keyword id="KW-0130">Cell adhesion</keyword>
<keyword id="KW-0133">Cell shape</keyword>
<keyword id="KW-1015">Disulfide bond</keyword>
<keyword id="KW-0238">DNA-binding</keyword>
<keyword id="KW-0272">Extracellular matrix</keyword>
<keyword id="KW-0325">Glycoprotein</keyword>
<keyword id="KW-0358">Heparin-binding</keyword>
<keyword id="KW-1017">Isopeptide bond</keyword>
<keyword id="KW-0558">Oxidation</keyword>
<keyword id="KW-0597">Phosphoprotein</keyword>
<keyword id="KW-0873">Pyrrolidone carboxylic acid</keyword>
<keyword id="KW-1185">Reference proteome</keyword>
<keyword id="KW-0677">Repeat</keyword>
<keyword id="KW-0964">Secreted</keyword>
<keyword id="KW-0732">Signal</keyword>
<keyword id="KW-0765">Sulfation</keyword>
<reference key="1">
    <citation type="journal article" date="2009" name="Science">
        <title>Genome sequence, comparative analysis, and population genetics of the domestic horse.</title>
        <authorList>
            <person name="Wade C.M."/>
            <person name="Giulotto E."/>
            <person name="Sigurdsson S."/>
            <person name="Zoli M."/>
            <person name="Gnerre S."/>
            <person name="Imsland F."/>
            <person name="Lear T.L."/>
            <person name="Adelson D.L."/>
            <person name="Bailey E."/>
            <person name="Bellone R.R."/>
            <person name="Bloecker H."/>
            <person name="Distl O."/>
            <person name="Edgar R.C."/>
            <person name="Garber M."/>
            <person name="Leeb T."/>
            <person name="Mauceli E."/>
            <person name="MacLeod J.N."/>
            <person name="Penedo M.C.T."/>
            <person name="Raison J.M."/>
            <person name="Sharpe T."/>
            <person name="Vogel J."/>
            <person name="Andersson L."/>
            <person name="Antczak D.F."/>
            <person name="Biagi T."/>
            <person name="Binns M.M."/>
            <person name="Chowdhary B.P."/>
            <person name="Coleman S.J."/>
            <person name="Della Valle G."/>
            <person name="Fryc S."/>
            <person name="Guerin G."/>
            <person name="Hasegawa T."/>
            <person name="Hill E.W."/>
            <person name="Jurka J."/>
            <person name="Kiialainen A."/>
            <person name="Lindgren G."/>
            <person name="Liu J."/>
            <person name="Magnani E."/>
            <person name="Mickelson J.R."/>
            <person name="Murray J."/>
            <person name="Nergadze S.G."/>
            <person name="Onofrio R."/>
            <person name="Pedroni S."/>
            <person name="Piras M.F."/>
            <person name="Raudsepp T."/>
            <person name="Rocchi M."/>
            <person name="Roeed K.H."/>
            <person name="Ryder O.A."/>
            <person name="Searle S."/>
            <person name="Skow L."/>
            <person name="Swinburne J.E."/>
            <person name="Syvaenen A.C."/>
            <person name="Tozaki T."/>
            <person name="Valberg S.J."/>
            <person name="Vaudin M."/>
            <person name="White J.R."/>
            <person name="Zody M.C."/>
            <person name="Lander E.S."/>
            <person name="Lindblad-Toh K."/>
        </authorList>
    </citation>
    <scope>NUCLEOTIDE SEQUENCE [LARGE SCALE GENOMIC DNA]</scope>
    <source>
        <strain>Thoroughbred</strain>
    </source>
</reference>
<reference key="2">
    <citation type="journal article" date="1996" name="J. Biol. Chem.">
        <title>Fibronectin mRNA splice variant in articular cartilage lacks bases encoding the V, III-15, and I-10 protein segments.</title>
        <authorList>
            <person name="Macleod J.N."/>
            <person name="Burton-Wurster N."/>
            <person name="Gu D.N."/>
            <person name="Lust G."/>
        </authorList>
    </citation>
    <scope>NUCLEOTIDE SEQUENCE [MRNA] OF 1879-2400 (ISOFORMS 1 AND 2)</scope>
    <scope>FUNCTION</scope>
    <scope>TISSUE SPECIFICITY (ISOFORM 2)</scope>
    <source>
        <tissue>Liver</tissue>
    </source>
</reference>
<proteinExistence type="evidence at transcript level"/>
<comment type="function">
    <text evidence="2 4">Fibronectins bind cell surfaces and various compounds including collagen, fibrin, heparin, DNA, and actin. Fibronectins are involved in cell adhesion, cell motility, opsonization, wound healing, and maintenance of cell shape (By similarity). Involved in osteoblast compaction through the fibronectin fibrillogenesis cell-mediated matrix assembly process, essential for osteoblast mineralization. Participates in the regulation of type I collagen deposition by osteoblasts (By similarity).</text>
</comment>
<comment type="function">
    <molecule>Anastellin</molecule>
    <text evidence="2">Binds fibronectin and induces fibril formation. This fibronectin polymer, named superfibronectin, exhibits enhanced adhesive properties. Both anastellin and superfibronectin inhibit tumor growth, angiogenesis and metastasis. Anastellin activates p38 MAPK and inhibits lysophospholipid signaling.</text>
</comment>
<comment type="function">
    <molecule>Isoform 2</molecule>
    <text evidence="14">Probably involved in matrix organization of cartilage.</text>
</comment>
<comment type="function">
    <text evidence="4">Secreted by contracting muscle, induces liver autophagy, a degradative pathway for nutrient mobilization and damage removal, and systemic insulin sensitization via hepatic ITGA5:ITGB1 integrin receptor signaling.</text>
</comment>
<comment type="subunit">
    <text evidence="1 2 4">Mostly heterodimers or multimers of alternatively spliced variants, connected by 2 disulfide bonds near the carboxyl ends; to a lesser extent homodimers. Interacts with FBLN1, AMBP, TNR, LGALS3BP and COL13A1. Interacts with FBLN7 (By similarity). Interacts with COMP. Interacts (via type III repeats 9-14) with TNFAIP6 (via CUB domain); this interaction enhances fibronectin fibril assembly. TNFAIP6 may act as a bridging molecule between FN1 and THBS1 (By similarity). Interacts with TNR; the interaction inhibits cell adhesion and neurite outgrowth (By similarity). Interacts with FST3 and MYOC (By similarity). Interacts with SVEP1 (By similarity).</text>
</comment>
<comment type="subcellular location">
    <subcellularLocation>
        <location evidence="4">Secreted</location>
        <location evidence="4">Extracellular space</location>
        <location evidence="4">Extracellular matrix</location>
    </subcellularLocation>
    <subcellularLocation>
        <location evidence="4">Secreted</location>
    </subcellularLocation>
</comment>
<comment type="alternative products">
    <event type="alternative splicing"/>
    <isoform>
        <id>Q28377-1</id>
        <name>1</name>
        <sequence type="displayed"/>
    </isoform>
    <isoform>
        <id>Q28377-2</id>
        <name>2</name>
        <name>(V+C)-</name>
        <sequence type="described" ref="VSP_003253 VSP_003254"/>
    </isoform>
    <text evidence="13">A number of isoforms are produced. The diversity of isoforms depends on the V region and either of the two extra domain which can be either included or excluded (partially or completely for the V region).</text>
</comment>
<comment type="tissue specificity">
    <molecule>Isoform 2</molecule>
    <text evidence="11">Major transcript in articular cartilage; very low abundance in lymph node, bone, aorta, and skin; absent from liver, spleen, placenta, cardiac muscle, skeletal muscle, stomach, small intestine, and kidney.</text>
</comment>
<comment type="PTM">
    <text evidence="2">Sulfated.</text>
</comment>
<comment type="PTM">
    <text evidence="4">Forms covalent cross-links mediated by a transglutaminase, such as F13A or TGM2, between a glutamine and the epsilon-amino group of a lysine residue, forming homopolymers and heteropolymers (e.g. fibrinogen-fibronectin, collagen-fibronectin heteropolymers).</text>
</comment>
<comment type="PTM">
    <text evidence="4">Some lysine residues are oxidized to allysine by LOXL3, promoting fibronectin activation and matrix formation.</text>
</comment>
<comment type="PTM">
    <text evidence="3">Serotonylated on Gln residues by TGM2 in response to hypoxia.</text>
</comment>
<comment type="miscellaneous">
    <molecule>Isoform 2</molecule>
    <text evidence="13">Lacks repeat 15 of fibronectin type-III, repeat 10 of fibronectin type-I, and the connecting strand 3.</text>
</comment>
<name>FINC_HORSE</name>
<organism>
    <name type="scientific">Equus caballus</name>
    <name type="common">Horse</name>
    <dbReference type="NCBI Taxonomy" id="9796"/>
    <lineage>
        <taxon>Eukaryota</taxon>
        <taxon>Metazoa</taxon>
        <taxon>Chordata</taxon>
        <taxon>Craniata</taxon>
        <taxon>Vertebrata</taxon>
        <taxon>Euteleostomi</taxon>
        <taxon>Mammalia</taxon>
        <taxon>Eutheria</taxon>
        <taxon>Laurasiatheria</taxon>
        <taxon>Perissodactyla</taxon>
        <taxon>Equidae</taxon>
        <taxon>Equus</taxon>
    </lineage>
</organism>
<sequence length="2477" mass="272168">MLRGPGPGLLLLVVLSLGTAVPSSGASKRKRQDQQIIQPQSPVAVGQSKPGCYDNGKHYQINQQWERTYLGNALVCTCYGGSRGFNCESKPEPEETCFDKYTGNTYRVGDTYERPKDSMIWDCTCIGAGRGRISCTIANRCHEGGQSYKIGDTWRRPHETGGYMLECVCLGNGKGEWTCKPIAEKCFDHAAGTSYVVGETWEKPYQGWMMVDCTCLGEGNGRITCTSRNRCNDQDTRTSYRIGDTWSKKDNRGNLLQCICTGNGRGEWKCERHASLQTTSTGSGPFTDVRTAIYQPQPHPQPAPYGHCVTDSGVVYSVGMQWLKTQGNKQMLCTCLGNGVSCQETAVTQTYGGNSNGEPCVLPFTYNGRTFYSCTTEGRQDGHLWCSTTSNYEQDQKYSFCTDSAVLVQTRGGNSNGALCHFPFLYNNHNYTDCTSEGRRDNMKWCGTTQNYDADQKFGFCPMAAHEEICTTNEGVMYRVGDQWDKQHDMGHMMRCTCVGNGRGEWTCVAYSQLRDQCIVDDITYNVNDTFHKRHEEGHMLNCTCFGQGRGRWKCDPIDQCQDSETRTFYQIGDSWEKYVHGVRYQCYCYGRGIGEWHCQPLQTYPGTTGPVQVIITETPSQPNSHPIQWNAPEPSHISKYILRWKPKNAPGRWKEATIPGHLNSYTIKGLRPGVVYEGQLISVQHYGHKEVTRFDFTTTSTSPAVTSNTVTGETTPFSPVVATSESVTEITASSFVVSWVSASDTVSGFRVEYELSEEGDEPQYLDLPSTATSVNIPDLLPGRKYIVNVYQISEEGEQSLILSTSQTTAPDAPPDPTVDQVDDTSIVVRWSRPQAPITGYRIVYSPSVEGSSTELTLPETANSVTLSDLQPGVQYNITIYAVEENQESTPVFIQQETTGVPRADKVPPPRDLQFVEVTDVKITIMWTPPESAVTGYRVDVLPVNLPGEHGQRLPISRNTFAEVTGLSPGVTYHFKIFAVNHGRESKPLTGEQTTKLDAPTNLRFINETESTVIVTWTPPRARIAGYRLTVGLTRGGQPKQYNVGPSASQYPLRSLQPGSEYTVTLVAVKGNQQSPKATGVFTTLQSPGSIPPYNTEVTETTIVITWTPAPRIGFKLGVRPSQGGEAPREVTSDSGSIVVSGLTPGVEYVYTISVLRDGQERDAPIVKKVVTPLSPPTNLHLEANPDTGVLTVSWERSTTPDITGYRITTTPTSGQQGYSLEEVVHADQSSCTFENLSPGLEYNVSVYTVKDDKESVPISDTIIPEVPQLTDLSFVDITDSSIGLRWTPLNSSTIIGYRITVVAAGEGIPIFEDFVDSSVGYYTVTGLEPGIDYDISVITLINGGESAPTTLTQQTAVPPPTDLRFTNVGPDTMRVTWAPPPSIELTNLLVRYSPVKNEEDVAELSISPSDNAVVLTNLLPGTEYLVSVSSVYEQHESTPLRGRQKTGLDSPTGIDFSDITANSFTVHWIAPRATITGYRIRHHPEHTGGRPREDRVPPSRNSITLTNLNPGTEYVVSIVALNGREESPPLVGQQSTVSDVPRDLEVIATTPTSILISWDAPAVTVRYYRITYGETGGNSPVQEFTVPGSKSTATISGLKPGVDYTITVYAVTGRGDSPASSKPISIDYRTEIDKPSQMQVTDVQDNSISVRWLPSSSPVTGYRVTTTPKNGPGQSKTKTAGPDQTEMTIEGLQPTVEYVVSVYAQNQNGESQPLVQTAVTNIDRPRGLAFTDVDVDSIKIAWESPQGQVSRYRVTYSSPEDGIHELFPAPDGEEDTAELQGLRPGSEYTVSVVALHDDMESQPLIGTQSTAIPAPTELKFTQVTPTSLTAQWTAPNVQLTGYRVRVTPKEKTGPMKEINLAPDSTSVVVSGLMVATKYEVSVYALKDTLTSRPAQGIVTTLENVSPPRRARVTDATETTITISWRTKTETITGFQVDAVPANGQPPIQRTIKPDVRSYTITGLQPGTDYKIYLYTLNDNARSSPVIIDASTAIDAPSNLHFLATTPNSLLISWQPPRARITGYIIKYEKPGSPPREVVPRPHPGVTEATITGLEPGTEYTIQVIAIKNNQKSEPLIGRRKTDELPQLVTLPHPNLHGPEILDVPSTVQKTPFITNPGYDNGNGIQLPGTSGQQPSVGQQMIFEEHGFRRTTPPTTATPVRHRPRPYPPNVNEEIQIGHVPRGDVDQHLYPHVLGLNPNTSTGQEALSQTTISWTPFQESSEYIISCHPVGIDEEPLQFRVPGTSASATLTGLTRGATYNIIVEALKDQKRHKVREEVVTVGNSVDQGLGQPTADSCFDPYTVSHYAIGEEWERLSESGFKLSCQCLGFGSGHFRCDSSKWCHDNGVNYKIGEKWDRQGENGQMMSCTCLGNGKGEFKCDPHEATCYDDGKTYHVGEQWQKEYLGAICSCTCFGGQRGWRCDNCRRPGAEPGHEGSTGHSYNQYSQRYQQRTNTNVNCPIECFMPLDVQADRDDSRE</sequence>
<protein>
    <recommendedName>
        <fullName evidence="2">Fibronectin</fullName>
        <shortName>FN</shortName>
    </recommendedName>
    <component>
        <recommendedName>
            <fullName>Anastellin</fullName>
        </recommendedName>
    </component>
</protein>
<evidence type="ECO:0000250" key="1"/>
<evidence type="ECO:0000250" key="2">
    <source>
        <dbReference type="UniProtKB" id="P02751"/>
    </source>
</evidence>
<evidence type="ECO:0000250" key="3">
    <source>
        <dbReference type="UniProtKB" id="P07589"/>
    </source>
</evidence>
<evidence type="ECO:0000250" key="4">
    <source>
        <dbReference type="UniProtKB" id="P11276"/>
    </source>
</evidence>
<evidence type="ECO:0000255" key="5"/>
<evidence type="ECO:0000255" key="6">
    <source>
        <dbReference type="PROSITE-ProRule" id="PRU00316"/>
    </source>
</evidence>
<evidence type="ECO:0000255" key="7">
    <source>
        <dbReference type="PROSITE-ProRule" id="PRU00478"/>
    </source>
</evidence>
<evidence type="ECO:0000255" key="8">
    <source>
        <dbReference type="PROSITE-ProRule" id="PRU00479"/>
    </source>
</evidence>
<evidence type="ECO:0000255" key="9">
    <source>
        <dbReference type="PROSITE-ProRule" id="PRU00498"/>
    </source>
</evidence>
<evidence type="ECO:0000256" key="10">
    <source>
        <dbReference type="SAM" id="MobiDB-lite"/>
    </source>
</evidence>
<evidence type="ECO:0000269" key="11">
    <source>
    </source>
</evidence>
<evidence type="ECO:0000303" key="12">
    <source>
    </source>
</evidence>
<evidence type="ECO:0000305" key="13"/>
<evidence type="ECO:0000305" key="14">
    <source>
    </source>
</evidence>
<feature type="signal peptide" evidence="2">
    <location>
        <begin position="1"/>
        <end position="31"/>
    </location>
</feature>
<feature type="chain" id="PRO_0000158530" description="Fibronectin" evidence="5">
    <location>
        <begin position="32"/>
        <end position="2477"/>
    </location>
</feature>
<feature type="chain" id="PRO_0000451753" description="Anastellin" evidence="2">
    <location>
        <begin position="627"/>
        <end position="702"/>
    </location>
</feature>
<feature type="domain" description="Fibronectin type-I 1" evidence="7">
    <location>
        <begin position="50"/>
        <end position="90"/>
    </location>
</feature>
<feature type="domain" description="Fibronectin type-I 2" evidence="7">
    <location>
        <begin position="95"/>
        <end position="138"/>
    </location>
</feature>
<feature type="domain" description="Fibronectin type-I 3" evidence="7">
    <location>
        <begin position="139"/>
        <end position="182"/>
    </location>
</feature>
<feature type="domain" description="Fibronectin type-I 4" evidence="7">
    <location>
        <begin position="184"/>
        <end position="228"/>
    </location>
</feature>
<feature type="domain" description="Fibronectin type-I 5" evidence="7">
    <location>
        <begin position="229"/>
        <end position="273"/>
    </location>
</feature>
<feature type="domain" description="Fibronectin type-I 6" evidence="7">
    <location>
        <begin position="306"/>
        <end position="345"/>
    </location>
</feature>
<feature type="domain" description="Fibronectin type-II 1" evidence="8">
    <location>
        <begin position="355"/>
        <end position="403"/>
    </location>
</feature>
<feature type="domain" description="Fibronectin type-II 2" evidence="8">
    <location>
        <begin position="415"/>
        <end position="463"/>
    </location>
</feature>
<feature type="domain" description="Fibronectin type-I 7" evidence="7">
    <location>
        <begin position="468"/>
        <end position="511"/>
    </location>
</feature>
<feature type="domain" description="Fibronectin type-I 8" evidence="7">
    <location>
        <begin position="516"/>
        <end position="558"/>
    </location>
</feature>
<feature type="domain" description="Fibronectin type-I 9" evidence="7">
    <location>
        <begin position="559"/>
        <end position="602"/>
    </location>
</feature>
<feature type="domain" description="Fibronectin type-III 1" evidence="6">
    <location>
        <begin position="610"/>
        <end position="705"/>
    </location>
</feature>
<feature type="domain" description="Fibronectin type-III 2" evidence="6">
    <location>
        <begin position="722"/>
        <end position="812"/>
    </location>
</feature>
<feature type="domain" description="Fibronectin type-III 3" evidence="6">
    <location>
        <begin position="813"/>
        <end position="902"/>
    </location>
</feature>
<feature type="domain" description="Fibronectin type-III 4" evidence="6">
    <location>
        <begin position="909"/>
        <end position="998"/>
    </location>
</feature>
<feature type="domain" description="Fibronectin type-III 5" evidence="6">
    <location>
        <begin position="999"/>
        <end position="1088"/>
    </location>
</feature>
<feature type="domain" description="Fibronectin type-III 6" evidence="6">
    <location>
        <begin position="1089"/>
        <end position="1175"/>
    </location>
</feature>
<feature type="domain" description="Fibronectin type-III 7" evidence="6">
    <location>
        <begin position="1176"/>
        <end position="1270"/>
    </location>
</feature>
<feature type="domain" description="Fibronectin type-III 8; extra domain B" evidence="6">
    <location>
        <begin position="1271"/>
        <end position="1359"/>
    </location>
</feature>
<feature type="domain" description="Fibronectin type-III 9" evidence="6">
    <location>
        <begin position="1360"/>
        <end position="1452"/>
    </location>
</feature>
<feature type="domain" description="Fibronectin type-III 10" evidence="6">
    <location>
        <begin position="1453"/>
        <end position="1540"/>
    </location>
</feature>
<feature type="domain" description="Fibronectin type-III 11" evidence="6">
    <location>
        <begin position="1541"/>
        <end position="1634"/>
    </location>
</feature>
<feature type="domain" description="Fibronectin type-III 12" evidence="6">
    <location>
        <begin position="1635"/>
        <end position="1726"/>
    </location>
</feature>
<feature type="domain" description="Fibronectin type-III 13; extra domain A" evidence="6">
    <location>
        <begin position="1727"/>
        <end position="1814"/>
    </location>
</feature>
<feature type="domain" description="Fibronectin type-III 14" evidence="6">
    <location>
        <begin position="1815"/>
        <end position="1908"/>
    </location>
</feature>
<feature type="domain" description="Fibronectin type-III 15" evidence="6">
    <location>
        <begin position="1909"/>
        <end position="1995"/>
    </location>
</feature>
<feature type="domain" description="Fibronectin type-III 16" evidence="6">
    <location>
        <begin position="1996"/>
        <end position="2086"/>
    </location>
</feature>
<feature type="domain" description="Fibronectin type-III 17" evidence="6">
    <location>
        <begin position="2194"/>
        <end position="2288"/>
    </location>
</feature>
<feature type="domain" description="Fibronectin type-I 10" evidence="7">
    <location>
        <begin position="2295"/>
        <end position="2339"/>
    </location>
</feature>
<feature type="domain" description="Fibronectin type-I 11" evidence="7">
    <location>
        <begin position="2340"/>
        <end position="2382"/>
    </location>
</feature>
<feature type="domain" description="Fibronectin type-I 12" evidence="7">
    <location>
        <begin position="2384"/>
        <end position="2424"/>
    </location>
</feature>
<feature type="DNA-binding region" evidence="2">
    <location>
        <begin position="907"/>
        <end position="1172"/>
    </location>
</feature>
<feature type="region of interest" description="Disordered" evidence="10">
    <location>
        <begin position="24"/>
        <end position="48"/>
    </location>
</feature>
<feature type="region of interest" description="Fibrin- and heparin-binding 1" evidence="2">
    <location>
        <begin position="52"/>
        <end position="272"/>
    </location>
</feature>
<feature type="region of interest" description="Collagen-binding" evidence="2">
    <location>
        <begin position="308"/>
        <end position="608"/>
    </location>
</feature>
<feature type="region of interest" description="Critical for collagen binding" evidence="2">
    <location>
        <begin position="464"/>
        <end position="477"/>
    </location>
</feature>
<feature type="region of interest" description="Cell-attachment" evidence="2">
    <location>
        <begin position="1358"/>
        <end position="1631"/>
    </location>
</feature>
<feature type="region of interest" description="Disordered" evidence="10">
    <location>
        <begin position="1660"/>
        <end position="1685"/>
    </location>
</feature>
<feature type="region of interest" description="Heparin-binding 2" evidence="2">
    <location>
        <begin position="1812"/>
        <end position="2082"/>
    </location>
</feature>
<feature type="region of interest" description="Binds to FBLN1" evidence="2">
    <location>
        <begin position="1904"/>
        <end position="2082"/>
    </location>
</feature>
<feature type="region of interest" description="V region (type III connecting segment, IIICS)" evidence="2">
    <location>
        <begin position="2083"/>
        <end position="2202"/>
    </location>
</feature>
<feature type="region of interest" description="Disordered" evidence="10">
    <location>
        <begin position="2149"/>
        <end position="2169"/>
    </location>
</feature>
<feature type="region of interest" description="Fibrin-binding 2" evidence="2">
    <location>
        <begin position="2297"/>
        <end position="2428"/>
    </location>
</feature>
<feature type="short sequence motif" description="Cell attachment site" evidence="2">
    <location>
        <begin position="1615"/>
        <end position="1617"/>
    </location>
</feature>
<feature type="compositionally biased region" description="Polar residues" evidence="10">
    <location>
        <begin position="1660"/>
        <end position="1679"/>
    </location>
</feature>
<feature type="compositionally biased region" description="Low complexity" evidence="10">
    <location>
        <begin position="2150"/>
        <end position="2159"/>
    </location>
</feature>
<feature type="site" description="Important for superfibronectin formation" evidence="2">
    <location>
        <position position="663"/>
    </location>
</feature>
<feature type="site" description="Important for superfibronectin formation" evidence="2">
    <location>
        <position position="666"/>
    </location>
</feature>
<feature type="modified residue" description="Pyrrolidone carboxylic acid" evidence="2">
    <location>
        <position position="32"/>
    </location>
</feature>
<feature type="modified residue" description="Sulfotyrosine" evidence="5">
    <location>
        <position position="876"/>
    </location>
</feature>
<feature type="modified residue" description="Sulfotyrosine" evidence="5">
    <location>
        <position position="881"/>
    </location>
</feature>
<feature type="modified residue" description="Phosphothreonine" evidence="2">
    <location>
        <position position="2454"/>
    </location>
</feature>
<feature type="modified residue" description="Phosphoserine" evidence="2">
    <location>
        <position position="2475"/>
    </location>
</feature>
<feature type="glycosylation site" description="N-linked (GlcNAc...) asparagine" evidence="9">
    <location>
        <position position="430"/>
    </location>
</feature>
<feature type="glycosylation site" description="N-linked (GlcNAc...) asparagine" evidence="9">
    <location>
        <position position="528"/>
    </location>
</feature>
<feature type="glycosylation site" description="N-linked (GlcNAc...) asparagine" evidence="9">
    <location>
        <position position="542"/>
    </location>
</feature>
<feature type="glycosylation site" description="N-linked (GlcNAc...) asparagine" evidence="9">
    <location>
        <position position="877"/>
    </location>
</feature>
<feature type="glycosylation site" description="N-linked (GlcNAc...) asparagine" evidence="9">
    <location>
        <position position="1007"/>
    </location>
</feature>
<feature type="glycosylation site" description="N-linked (GlcNAc...) asparagine" evidence="9">
    <location>
        <position position="1244"/>
    </location>
</feature>
<feature type="glycosylation site" description="N-linked (GlcNAc...) asparagine" evidence="9">
    <location>
        <position position="1291"/>
    </location>
</feature>
<feature type="glycosylation site" description="N-linked (GlcNAc...) asparagine" evidence="9">
    <location>
        <position position="2199"/>
    </location>
</feature>
<feature type="disulfide bond" evidence="7">
    <location>
        <begin position="52"/>
        <end position="78"/>
    </location>
</feature>
<feature type="disulfide bond" evidence="7">
    <location>
        <begin position="76"/>
        <end position="87"/>
    </location>
</feature>
<feature type="disulfide bond" evidence="7">
    <location>
        <begin position="97"/>
        <end position="125"/>
    </location>
</feature>
<feature type="disulfide bond" evidence="7">
    <location>
        <begin position="123"/>
        <end position="135"/>
    </location>
</feature>
<feature type="disulfide bond" evidence="7">
    <location>
        <begin position="141"/>
        <end position="169"/>
    </location>
</feature>
<feature type="disulfide bond" evidence="7">
    <location>
        <begin position="167"/>
        <end position="179"/>
    </location>
</feature>
<feature type="disulfide bond" evidence="7">
    <location>
        <begin position="186"/>
        <end position="215"/>
    </location>
</feature>
<feature type="disulfide bond" evidence="7">
    <location>
        <begin position="213"/>
        <end position="225"/>
    </location>
</feature>
<feature type="disulfide bond" evidence="7">
    <location>
        <begin position="231"/>
        <end position="260"/>
    </location>
</feature>
<feature type="disulfide bond" evidence="7">
    <location>
        <begin position="258"/>
        <end position="270"/>
    </location>
</feature>
<feature type="disulfide bond" evidence="7">
    <location>
        <begin position="308"/>
        <end position="335"/>
    </location>
</feature>
<feature type="disulfide bond" evidence="7">
    <location>
        <begin position="333"/>
        <end position="342"/>
    </location>
</feature>
<feature type="disulfide bond" evidence="8">
    <location>
        <begin position="360"/>
        <end position="386"/>
    </location>
</feature>
<feature type="disulfide bond" evidence="8">
    <location>
        <begin position="374"/>
        <end position="401"/>
    </location>
</feature>
<feature type="disulfide bond" evidence="8">
    <location>
        <begin position="420"/>
        <end position="446"/>
    </location>
</feature>
<feature type="disulfide bond" evidence="8">
    <location>
        <begin position="434"/>
        <end position="461"/>
    </location>
</feature>
<feature type="disulfide bond" evidence="7">
    <location>
        <begin position="470"/>
        <end position="498"/>
    </location>
</feature>
<feature type="disulfide bond" evidence="7">
    <location>
        <begin position="496"/>
        <end position="508"/>
    </location>
</feature>
<feature type="disulfide bond" evidence="7">
    <location>
        <begin position="518"/>
        <end position="545"/>
    </location>
</feature>
<feature type="disulfide bond" evidence="7">
    <location>
        <begin position="543"/>
        <end position="555"/>
    </location>
</feature>
<feature type="disulfide bond" evidence="7">
    <location>
        <begin position="561"/>
        <end position="589"/>
    </location>
</feature>
<feature type="disulfide bond" evidence="7">
    <location>
        <begin position="587"/>
        <end position="599"/>
    </location>
</feature>
<feature type="disulfide bond" evidence="7">
    <location>
        <begin position="2297"/>
        <end position="2326"/>
    </location>
</feature>
<feature type="disulfide bond" evidence="7">
    <location>
        <begin position="2324"/>
        <end position="2336"/>
    </location>
</feature>
<feature type="disulfide bond" evidence="7">
    <location>
        <begin position="2342"/>
        <end position="2369"/>
    </location>
</feature>
<feature type="disulfide bond" evidence="7">
    <location>
        <begin position="2367"/>
        <end position="2379"/>
    </location>
</feature>
<feature type="disulfide bond" evidence="7">
    <location>
        <begin position="2386"/>
        <end position="2412"/>
    </location>
</feature>
<feature type="disulfide bond" evidence="7">
    <location>
        <begin position="2410"/>
        <end position="2421"/>
    </location>
</feature>
<feature type="cross-link" description="Isoglutamyl lysine isopeptide (Gln-Lys) (interchain with K-?)" evidence="4">
    <location>
        <position position="34"/>
    </location>
</feature>
<feature type="cross-link" description="Isoglutamyl lysine isopeptide (Gln-Lys) (interchain with K-?)" evidence="4">
    <location>
        <position position="35"/>
    </location>
</feature>
<feature type="cross-link" description="Isoglutamyl lysine isopeptide (Gln-Lys) (interchain with K-?)" evidence="4">
    <location>
        <position position="47"/>
    </location>
</feature>
<feature type="splice variant" id="VSP_003253" description="In isoform 2." evidence="12">
    <original>D</original>
    <variation>E</variation>
    <location>
        <position position="2083"/>
    </location>
</feature>
<feature type="splice variant" id="VSP_003254" description="In isoform 2." evidence="12">
    <location>
        <begin position="2084"/>
        <end position="2340"/>
    </location>
</feature>
<feature type="sequence conflict" description="In Ref. 2; AAC48614." evidence="13" ref="2">
    <original>L</original>
    <variation>P</variation>
    <location>
        <position position="2085"/>
    </location>
</feature>
<dbReference type="EMBL" id="PJAA01000007">
    <property type="status" value="NOT_ANNOTATED_CDS"/>
    <property type="molecule type" value="Genomic_DNA"/>
</dbReference>
<dbReference type="EMBL" id="U52107">
    <property type="protein sequence ID" value="AAC48613.1"/>
    <property type="molecule type" value="mRNA"/>
</dbReference>
<dbReference type="EMBL" id="U52108">
    <property type="protein sequence ID" value="AAC48614.1"/>
    <property type="molecule type" value="mRNA"/>
</dbReference>
<dbReference type="RefSeq" id="XP_001489154.5">
    <molecule id="Q28377-1"/>
    <property type="nucleotide sequence ID" value="XM_001489104.7"/>
</dbReference>
<dbReference type="RefSeq" id="XP_023498058.1">
    <molecule id="Q28377-2"/>
    <property type="nucleotide sequence ID" value="XM_023642290.2"/>
</dbReference>
<dbReference type="SMR" id="Q28377"/>
<dbReference type="FunCoup" id="Q28377">
    <property type="interactions" value="461"/>
</dbReference>
<dbReference type="STRING" id="9796.ENSECAP00000005223"/>
<dbReference type="GlyCosmos" id="Q28377">
    <property type="glycosylation" value="8 sites, No reported glycans"/>
</dbReference>
<dbReference type="PaxDb" id="9796-ENSECAP00000005223"/>
<dbReference type="PeptideAtlas" id="Q28377"/>
<dbReference type="Ensembl" id="ENSECAT00000007204.4">
    <molecule id="Q28377-1"/>
    <property type="protein sequence ID" value="ENSECAP00000005223.2"/>
    <property type="gene ID" value="ENSECAG00000000701.4"/>
</dbReference>
<dbReference type="Ensembl" id="ENSECAT00000065342.3">
    <molecule id="Q28377-2"/>
    <property type="protein sequence ID" value="ENSECAP00000028263.2"/>
    <property type="gene ID" value="ENSECAG00000000701.4"/>
</dbReference>
<dbReference type="GeneID" id="100034189"/>
<dbReference type="GeneTree" id="ENSGT00940000155126"/>
<dbReference type="HOGENOM" id="CLU_000916_0_0_1"/>
<dbReference type="InParanoid" id="Q28377"/>
<dbReference type="OMA" id="GHCITDS"/>
<dbReference type="OrthoDB" id="261433at2759"/>
<dbReference type="TreeFam" id="TF329915"/>
<dbReference type="Proteomes" id="UP000002281">
    <property type="component" value="Chromosome 6"/>
</dbReference>
<dbReference type="Bgee" id="ENSECAG00000000701">
    <property type="expression patterns" value="Expressed in articular cartilage of joint and 23 other cell types or tissues"/>
</dbReference>
<dbReference type="GO" id="GO:0016324">
    <property type="term" value="C:apical plasma membrane"/>
    <property type="evidence" value="ECO:0007669"/>
    <property type="project" value="Ensembl"/>
</dbReference>
<dbReference type="GO" id="GO:0005604">
    <property type="term" value="C:basement membrane"/>
    <property type="evidence" value="ECO:0007669"/>
    <property type="project" value="Ensembl"/>
</dbReference>
<dbReference type="GO" id="GO:0005793">
    <property type="term" value="C:endoplasmic reticulum-Golgi intermediate compartment"/>
    <property type="evidence" value="ECO:0007669"/>
    <property type="project" value="Ensembl"/>
</dbReference>
<dbReference type="GO" id="GO:0070062">
    <property type="term" value="C:extracellular exosome"/>
    <property type="evidence" value="ECO:0007669"/>
    <property type="project" value="Ensembl"/>
</dbReference>
<dbReference type="GO" id="GO:0005577">
    <property type="term" value="C:fibrinogen complex"/>
    <property type="evidence" value="ECO:0007669"/>
    <property type="project" value="Ensembl"/>
</dbReference>
<dbReference type="GO" id="GO:0003677">
    <property type="term" value="F:DNA binding"/>
    <property type="evidence" value="ECO:0007669"/>
    <property type="project" value="UniProtKB-KW"/>
</dbReference>
<dbReference type="GO" id="GO:0008201">
    <property type="term" value="F:heparin binding"/>
    <property type="evidence" value="ECO:0007669"/>
    <property type="project" value="UniProtKB-KW"/>
</dbReference>
<dbReference type="GO" id="GO:0042802">
    <property type="term" value="F:identical protein binding"/>
    <property type="evidence" value="ECO:0007669"/>
    <property type="project" value="Ensembl"/>
</dbReference>
<dbReference type="GO" id="GO:0005178">
    <property type="term" value="F:integrin binding"/>
    <property type="evidence" value="ECO:0000318"/>
    <property type="project" value="GO_Central"/>
</dbReference>
<dbReference type="GO" id="GO:0016504">
    <property type="term" value="F:peptidase activator activity"/>
    <property type="evidence" value="ECO:0007669"/>
    <property type="project" value="Ensembl"/>
</dbReference>
<dbReference type="GO" id="GO:0002020">
    <property type="term" value="F:protease binding"/>
    <property type="evidence" value="ECO:0007669"/>
    <property type="project" value="Ensembl"/>
</dbReference>
<dbReference type="GO" id="GO:0043394">
    <property type="term" value="F:proteoglycan binding"/>
    <property type="evidence" value="ECO:0000318"/>
    <property type="project" value="GO_Central"/>
</dbReference>
<dbReference type="GO" id="GO:0048018">
    <property type="term" value="F:receptor ligand activity"/>
    <property type="evidence" value="ECO:0007669"/>
    <property type="project" value="Ensembl"/>
</dbReference>
<dbReference type="GO" id="GO:0006953">
    <property type="term" value="P:acute-phase response"/>
    <property type="evidence" value="ECO:0007669"/>
    <property type="project" value="UniProtKB-KW"/>
</dbReference>
<dbReference type="GO" id="GO:0051702">
    <property type="term" value="P:biological process involved in interaction with symbiont"/>
    <property type="evidence" value="ECO:0007669"/>
    <property type="project" value="Ensembl"/>
</dbReference>
<dbReference type="GO" id="GO:0007161">
    <property type="term" value="P:calcium-independent cell-matrix adhesion"/>
    <property type="evidence" value="ECO:0007669"/>
    <property type="project" value="Ensembl"/>
</dbReference>
<dbReference type="GO" id="GO:0007160">
    <property type="term" value="P:cell-matrix adhesion"/>
    <property type="evidence" value="ECO:0000318"/>
    <property type="project" value="GO_Central"/>
</dbReference>
<dbReference type="GO" id="GO:0007044">
    <property type="term" value="P:cell-substrate junction assembly"/>
    <property type="evidence" value="ECO:0000318"/>
    <property type="project" value="GO_Central"/>
</dbReference>
<dbReference type="GO" id="GO:0035987">
    <property type="term" value="P:endodermal cell differentiation"/>
    <property type="evidence" value="ECO:0007669"/>
    <property type="project" value="Ensembl"/>
</dbReference>
<dbReference type="GO" id="GO:0043542">
    <property type="term" value="P:endothelial cell migration"/>
    <property type="evidence" value="ECO:0007669"/>
    <property type="project" value="Ensembl"/>
</dbReference>
<dbReference type="GO" id="GO:0007507">
    <property type="term" value="P:heart development"/>
    <property type="evidence" value="ECO:0000318"/>
    <property type="project" value="GO_Central"/>
</dbReference>
<dbReference type="GO" id="GO:0033622">
    <property type="term" value="P:integrin activation"/>
    <property type="evidence" value="ECO:0007669"/>
    <property type="project" value="Ensembl"/>
</dbReference>
<dbReference type="GO" id="GO:0007229">
    <property type="term" value="P:integrin-mediated signaling pathway"/>
    <property type="evidence" value="ECO:0007669"/>
    <property type="project" value="Ensembl"/>
</dbReference>
<dbReference type="GO" id="GO:0150102">
    <property type="term" value="P:negative regulation of monocyte activation"/>
    <property type="evidence" value="ECO:0007669"/>
    <property type="project" value="Ensembl"/>
</dbReference>
<dbReference type="GO" id="GO:0071635">
    <property type="term" value="P:negative regulation of transforming growth factor beta production"/>
    <property type="evidence" value="ECO:0007669"/>
    <property type="project" value="Ensembl"/>
</dbReference>
<dbReference type="GO" id="GO:0007399">
    <property type="term" value="P:nervous system development"/>
    <property type="evidence" value="ECO:0000318"/>
    <property type="project" value="GO_Central"/>
</dbReference>
<dbReference type="GO" id="GO:1901166">
    <property type="term" value="P:neural crest cell migration involved in autonomic nervous system development"/>
    <property type="evidence" value="ECO:0007669"/>
    <property type="project" value="Ensembl"/>
</dbReference>
<dbReference type="GO" id="GO:0045773">
    <property type="term" value="P:positive regulation of axon extension"/>
    <property type="evidence" value="ECO:0007669"/>
    <property type="project" value="Ensembl"/>
</dbReference>
<dbReference type="GO" id="GO:0048146">
    <property type="term" value="P:positive regulation of fibroblast proliferation"/>
    <property type="evidence" value="ECO:0007669"/>
    <property type="project" value="Ensembl"/>
</dbReference>
<dbReference type="GO" id="GO:0010628">
    <property type="term" value="P:positive regulation of gene expression"/>
    <property type="evidence" value="ECO:0007669"/>
    <property type="project" value="Ensembl"/>
</dbReference>
<dbReference type="GO" id="GO:0051897">
    <property type="term" value="P:positive regulation of phosphatidylinositol 3-kinase/protein kinase B signal transduction"/>
    <property type="evidence" value="ECO:0007669"/>
    <property type="project" value="Ensembl"/>
</dbReference>
<dbReference type="GO" id="GO:1904237">
    <property type="term" value="P:positive regulation of substrate-dependent cell migration, cell attachment to substrate"/>
    <property type="evidence" value="ECO:0007669"/>
    <property type="project" value="Ensembl"/>
</dbReference>
<dbReference type="GO" id="GO:0008360">
    <property type="term" value="P:regulation of cell shape"/>
    <property type="evidence" value="ECO:0007669"/>
    <property type="project" value="UniProtKB-KW"/>
</dbReference>
<dbReference type="GO" id="GO:0070372">
    <property type="term" value="P:regulation of ERK1 and ERK2 cascade"/>
    <property type="evidence" value="ECO:0007669"/>
    <property type="project" value="Ensembl"/>
</dbReference>
<dbReference type="GO" id="GO:0014850">
    <property type="term" value="P:response to muscle activity"/>
    <property type="evidence" value="ECO:0007669"/>
    <property type="project" value="Ensembl"/>
</dbReference>
<dbReference type="GO" id="GO:0034446">
    <property type="term" value="P:substrate adhesion-dependent cell spreading"/>
    <property type="evidence" value="ECO:0007669"/>
    <property type="project" value="Ensembl"/>
</dbReference>
<dbReference type="GO" id="GO:0042060">
    <property type="term" value="P:wound healing"/>
    <property type="evidence" value="ECO:0007669"/>
    <property type="project" value="Ensembl"/>
</dbReference>
<dbReference type="CDD" id="cd00061">
    <property type="entry name" value="FN1"/>
    <property type="match status" value="12"/>
</dbReference>
<dbReference type="CDD" id="cd00062">
    <property type="entry name" value="FN2"/>
    <property type="match status" value="2"/>
</dbReference>
<dbReference type="CDD" id="cd00063">
    <property type="entry name" value="FN3"/>
    <property type="match status" value="16"/>
</dbReference>
<dbReference type="FunFam" id="2.10.70.10:FF:000004">
    <property type="entry name" value="Fibronectin 1"/>
    <property type="match status" value="1"/>
</dbReference>
<dbReference type="FunFam" id="2.10.70.10:FF:000006">
    <property type="entry name" value="Fibronectin 1"/>
    <property type="match status" value="3"/>
</dbReference>
<dbReference type="FunFam" id="2.10.70.10:FF:000007">
    <property type="entry name" value="Fibronectin 1"/>
    <property type="match status" value="2"/>
</dbReference>
<dbReference type="FunFam" id="2.10.70.10:FF:000018">
    <property type="entry name" value="Fibronectin 1"/>
    <property type="match status" value="1"/>
</dbReference>
<dbReference type="FunFam" id="2.10.70.10:FF:000027">
    <property type="entry name" value="Fibronectin 1"/>
    <property type="match status" value="1"/>
</dbReference>
<dbReference type="FunFam" id="2.60.40.10:FF:000099">
    <property type="entry name" value="Fibronectin 1"/>
    <property type="match status" value="3"/>
</dbReference>
<dbReference type="FunFam" id="2.60.40.10:FF:000417">
    <property type="entry name" value="Fibronectin 1"/>
    <property type="match status" value="1"/>
</dbReference>
<dbReference type="FunFam" id="2.60.40.10:FF:000579">
    <property type="entry name" value="Fibronectin 1"/>
    <property type="match status" value="1"/>
</dbReference>
<dbReference type="FunFam" id="2.60.40.10:FF:000622">
    <property type="entry name" value="Fibronectin 1"/>
    <property type="match status" value="1"/>
</dbReference>
<dbReference type="FunFam" id="2.60.40.10:FF:001069">
    <property type="entry name" value="Fibronectin 1"/>
    <property type="match status" value="1"/>
</dbReference>
<dbReference type="FunFam" id="2.10.10.10:FF:000001">
    <property type="entry name" value="Fibronectin 1a isoform 1"/>
    <property type="match status" value="2"/>
</dbReference>
<dbReference type="FunFam" id="2.10.70.10:FF:000017">
    <property type="entry name" value="Fibronectin isoform X1"/>
    <property type="match status" value="1"/>
</dbReference>
<dbReference type="FunFam" id="2.60.40.10:FF:000227">
    <property type="entry name" value="Fibronectin isoform X1"/>
    <property type="match status" value="1"/>
</dbReference>
<dbReference type="FunFam" id="2.10.70.10:FF:000020">
    <property type="entry name" value="fibronectin isoform X1"/>
    <property type="match status" value="1"/>
</dbReference>
<dbReference type="FunFam" id="2.10.70.10:FF:000021">
    <property type="entry name" value="fibronectin isoform X1"/>
    <property type="match status" value="1"/>
</dbReference>
<dbReference type="FunFam" id="2.10.70.10:FF:000022">
    <property type="entry name" value="fibronectin isoform X1"/>
    <property type="match status" value="1"/>
</dbReference>
<dbReference type="FunFam" id="2.60.40.10:FF:000275">
    <property type="entry name" value="fibronectin isoform X1"/>
    <property type="match status" value="1"/>
</dbReference>
<dbReference type="FunFam" id="2.60.40.10:FF:000300">
    <property type="entry name" value="fibronectin isoform X1"/>
    <property type="match status" value="1"/>
</dbReference>
<dbReference type="FunFam" id="2.60.40.10:FF:000306">
    <property type="entry name" value="fibronectin isoform X1"/>
    <property type="match status" value="1"/>
</dbReference>
<dbReference type="FunFam" id="2.60.40.10:FF:000317">
    <property type="entry name" value="fibronectin isoform X1"/>
    <property type="match status" value="1"/>
</dbReference>
<dbReference type="FunFam" id="2.60.40.10:FF:000336">
    <property type="entry name" value="fibronectin isoform X1"/>
    <property type="match status" value="1"/>
</dbReference>
<dbReference type="FunFam" id="2.60.40.10:FF:000364">
    <property type="entry name" value="fibronectin isoform X1"/>
    <property type="match status" value="1"/>
</dbReference>
<dbReference type="FunFam" id="2.60.40.10:FF:000382">
    <property type="entry name" value="fibronectin isoform X1"/>
    <property type="match status" value="1"/>
</dbReference>
<dbReference type="FunFam" id="2.60.40.10:FF:000447">
    <property type="entry name" value="fibronectin isoform X1"/>
    <property type="match status" value="1"/>
</dbReference>
<dbReference type="FunFam" id="2.60.40.10:FF:000433">
    <property type="entry name" value="fibronectin isoform X5"/>
    <property type="match status" value="1"/>
</dbReference>
<dbReference type="Gene3D" id="2.10.70.10">
    <property type="entry name" value="Complement Module, domain 1"/>
    <property type="match status" value="12"/>
</dbReference>
<dbReference type="Gene3D" id="2.10.10.10">
    <property type="entry name" value="Fibronectin, type II, collagen-binding"/>
    <property type="match status" value="2"/>
</dbReference>
<dbReference type="Gene3D" id="2.60.40.10">
    <property type="entry name" value="Immunoglobulins"/>
    <property type="match status" value="17"/>
</dbReference>
<dbReference type="InterPro" id="IPR050991">
    <property type="entry name" value="ECM_Regulatory_Proteins"/>
</dbReference>
<dbReference type="InterPro" id="IPR000083">
    <property type="entry name" value="Fibronectin_type1"/>
</dbReference>
<dbReference type="InterPro" id="IPR003961">
    <property type="entry name" value="FN3_dom"/>
</dbReference>
<dbReference type="InterPro" id="IPR036116">
    <property type="entry name" value="FN3_sf"/>
</dbReference>
<dbReference type="InterPro" id="IPR000562">
    <property type="entry name" value="FN_type2_dom"/>
</dbReference>
<dbReference type="InterPro" id="IPR036943">
    <property type="entry name" value="FN_type2_sf"/>
</dbReference>
<dbReference type="InterPro" id="IPR013783">
    <property type="entry name" value="Ig-like_fold"/>
</dbReference>
<dbReference type="InterPro" id="IPR013806">
    <property type="entry name" value="Kringle-like"/>
</dbReference>
<dbReference type="PANTHER" id="PTHR46708:SF8">
    <property type="entry name" value="FIBRONECTIN"/>
    <property type="match status" value="1"/>
</dbReference>
<dbReference type="PANTHER" id="PTHR46708">
    <property type="entry name" value="TENASCIN"/>
    <property type="match status" value="1"/>
</dbReference>
<dbReference type="Pfam" id="PF00039">
    <property type="entry name" value="fn1"/>
    <property type="match status" value="11"/>
</dbReference>
<dbReference type="Pfam" id="PF00040">
    <property type="entry name" value="fn2"/>
    <property type="match status" value="2"/>
</dbReference>
<dbReference type="Pfam" id="PF00041">
    <property type="entry name" value="fn3"/>
    <property type="match status" value="16"/>
</dbReference>
<dbReference type="PRINTS" id="PR00013">
    <property type="entry name" value="FNTYPEII"/>
</dbReference>
<dbReference type="SMART" id="SM00058">
    <property type="entry name" value="FN1"/>
    <property type="match status" value="12"/>
</dbReference>
<dbReference type="SMART" id="SM00059">
    <property type="entry name" value="FN2"/>
    <property type="match status" value="2"/>
</dbReference>
<dbReference type="SMART" id="SM00060">
    <property type="entry name" value="FN3"/>
    <property type="match status" value="17"/>
</dbReference>
<dbReference type="SUPFAM" id="SSF49265">
    <property type="entry name" value="Fibronectin type III"/>
    <property type="match status" value="11"/>
</dbReference>
<dbReference type="SUPFAM" id="SSF57603">
    <property type="entry name" value="FnI-like domain"/>
    <property type="match status" value="12"/>
</dbReference>
<dbReference type="SUPFAM" id="SSF57440">
    <property type="entry name" value="Kringle-like"/>
    <property type="match status" value="2"/>
</dbReference>
<dbReference type="PROSITE" id="PS00022">
    <property type="entry name" value="EGF_1"/>
    <property type="match status" value="2"/>
</dbReference>
<dbReference type="PROSITE" id="PS01253">
    <property type="entry name" value="FN1_1"/>
    <property type="match status" value="12"/>
</dbReference>
<dbReference type="PROSITE" id="PS51091">
    <property type="entry name" value="FN1_2"/>
    <property type="match status" value="12"/>
</dbReference>
<dbReference type="PROSITE" id="PS00023">
    <property type="entry name" value="FN2_1"/>
    <property type="match status" value="2"/>
</dbReference>
<dbReference type="PROSITE" id="PS51092">
    <property type="entry name" value="FN2_2"/>
    <property type="match status" value="2"/>
</dbReference>
<dbReference type="PROSITE" id="PS50853">
    <property type="entry name" value="FN3"/>
    <property type="match status" value="17"/>
</dbReference>